<comment type="cofactor">
    <cofactor evidence="1">
        <name>Mg(2+)</name>
        <dbReference type="ChEBI" id="CHEBI:18420"/>
    </cofactor>
</comment>
<comment type="similarity">
    <text evidence="2">Belongs to the FAH family.</text>
</comment>
<gene>
    <name type="ordered locus">Bcen_5340</name>
</gene>
<organism>
    <name type="scientific">Burkholderia orbicola (strain AU 1054)</name>
    <dbReference type="NCBI Taxonomy" id="331271"/>
    <lineage>
        <taxon>Bacteria</taxon>
        <taxon>Pseudomonadati</taxon>
        <taxon>Pseudomonadota</taxon>
        <taxon>Betaproteobacteria</taxon>
        <taxon>Burkholderiales</taxon>
        <taxon>Burkholderiaceae</taxon>
        <taxon>Burkholderia</taxon>
        <taxon>Burkholderia cepacia complex</taxon>
        <taxon>Burkholderia orbicola</taxon>
    </lineage>
</organism>
<accession>Q1BJJ1</accession>
<evidence type="ECO:0000250" key="1">
    <source>
        <dbReference type="UniProtKB" id="Q6P587"/>
    </source>
</evidence>
<evidence type="ECO:0000305" key="2"/>
<keyword id="KW-0378">Hydrolase</keyword>
<keyword id="KW-0460">Magnesium</keyword>
<keyword id="KW-0479">Metal-binding</keyword>
<protein>
    <recommendedName>
        <fullName evidence="2">Putative hydrolase Bcen_5340</fullName>
        <ecNumber>3.-.-.-</ecNumber>
    </recommendedName>
</protein>
<proteinExistence type="inferred from homology"/>
<dbReference type="EC" id="3.-.-.-"/>
<dbReference type="EMBL" id="CP000379">
    <property type="protein sequence ID" value="ABF80214.1"/>
    <property type="molecule type" value="Genomic_DNA"/>
</dbReference>
<dbReference type="SMR" id="Q1BJJ1"/>
<dbReference type="HOGENOM" id="CLU_028458_3_4_4"/>
<dbReference type="GO" id="GO:0016787">
    <property type="term" value="F:hydrolase activity"/>
    <property type="evidence" value="ECO:0007669"/>
    <property type="project" value="UniProtKB-KW"/>
</dbReference>
<dbReference type="GO" id="GO:0046872">
    <property type="term" value="F:metal ion binding"/>
    <property type="evidence" value="ECO:0007669"/>
    <property type="project" value="UniProtKB-KW"/>
</dbReference>
<dbReference type="GO" id="GO:0050385">
    <property type="term" value="F:ureidoglycolate lyase activity"/>
    <property type="evidence" value="ECO:0007669"/>
    <property type="project" value="UniProtKB-EC"/>
</dbReference>
<dbReference type="GO" id="GO:0019628">
    <property type="term" value="P:urate catabolic process"/>
    <property type="evidence" value="ECO:0007669"/>
    <property type="project" value="UniProtKB-UniPathway"/>
</dbReference>
<dbReference type="FunFam" id="3.90.850.10:FF:000002">
    <property type="entry name" value="2-hydroxyhepta-2,4-diene-1,7-dioate isomerase"/>
    <property type="match status" value="1"/>
</dbReference>
<dbReference type="Gene3D" id="3.90.850.10">
    <property type="entry name" value="Fumarylacetoacetase-like, C-terminal domain"/>
    <property type="match status" value="1"/>
</dbReference>
<dbReference type="InterPro" id="IPR051121">
    <property type="entry name" value="FAH"/>
</dbReference>
<dbReference type="InterPro" id="IPR011234">
    <property type="entry name" value="Fumarylacetoacetase-like_C"/>
</dbReference>
<dbReference type="InterPro" id="IPR036663">
    <property type="entry name" value="Fumarylacetoacetase_C_sf"/>
</dbReference>
<dbReference type="PANTHER" id="PTHR42796:SF4">
    <property type="entry name" value="FUMARYLACETOACETATE HYDROLASE DOMAIN-CONTAINING PROTEIN 2A"/>
    <property type="match status" value="1"/>
</dbReference>
<dbReference type="PANTHER" id="PTHR42796">
    <property type="entry name" value="FUMARYLACETOACETATE HYDROLASE DOMAIN-CONTAINING PROTEIN 2A-RELATED"/>
    <property type="match status" value="1"/>
</dbReference>
<dbReference type="Pfam" id="PF01557">
    <property type="entry name" value="FAA_hydrolase"/>
    <property type="match status" value="1"/>
</dbReference>
<dbReference type="SUPFAM" id="SSF56529">
    <property type="entry name" value="FAH"/>
    <property type="match status" value="1"/>
</dbReference>
<sequence>MKLLRYGPSGQEKPGILDAAGRIRDLSAHVPDLAGDVLSDAGLARLRAIDPATLPLVSGEPRIGACVGHVGKFIGIGLNYADHAAEAGMPVPKEPVVFGKWTSSICGPNDGIDIPKGSVKTDWEVELGVVIGAKCKDVDEARALDYVAGYCVVNDVSEREWQIERGGQWDKGKGFDTFGPIGPWLVTRDEVPDPQRLDLWLEIDGHRYQNGNTRTMVFTVAQLVAYLSTCMTLQPGDVITTGTPPGVGMGVKPSPVFLKAGQTVRLGIEGLGEQLQRTRDAQ</sequence>
<feature type="chain" id="PRO_0000371509" description="Putative hydrolase Bcen_5340">
    <location>
        <begin position="1"/>
        <end position="282"/>
    </location>
</feature>
<feature type="binding site" evidence="1">
    <location>
        <position position="124"/>
    </location>
    <ligand>
        <name>Mg(2+)</name>
        <dbReference type="ChEBI" id="CHEBI:18420"/>
    </ligand>
</feature>
<feature type="binding site" evidence="1">
    <location>
        <position position="126"/>
    </location>
    <ligand>
        <name>Mg(2+)</name>
        <dbReference type="ChEBI" id="CHEBI:18420"/>
    </ligand>
</feature>
<feature type="binding site" evidence="1">
    <location>
        <position position="155"/>
    </location>
    <ligand>
        <name>Mg(2+)</name>
        <dbReference type="ChEBI" id="CHEBI:18420"/>
    </ligand>
</feature>
<name>UGL_BURO1</name>
<reference key="1">
    <citation type="submission" date="2006-05" db="EMBL/GenBank/DDBJ databases">
        <title>Complete sequence of chromosome 2 of Burkholderia cenocepacia AU 1054.</title>
        <authorList>
            <consortium name="US DOE Joint Genome Institute"/>
            <person name="Copeland A."/>
            <person name="Lucas S."/>
            <person name="Lapidus A."/>
            <person name="Barry K."/>
            <person name="Detter J.C."/>
            <person name="Glavina del Rio T."/>
            <person name="Hammon N."/>
            <person name="Israni S."/>
            <person name="Dalin E."/>
            <person name="Tice H."/>
            <person name="Pitluck S."/>
            <person name="Chain P."/>
            <person name="Malfatti S."/>
            <person name="Shin M."/>
            <person name="Vergez L."/>
            <person name="Schmutz J."/>
            <person name="Larimer F."/>
            <person name="Land M."/>
            <person name="Hauser L."/>
            <person name="Kyrpides N."/>
            <person name="Lykidis A."/>
            <person name="LiPuma J.J."/>
            <person name="Konstantinidis K."/>
            <person name="Tiedje J.M."/>
            <person name="Richardson P."/>
        </authorList>
    </citation>
    <scope>NUCLEOTIDE SEQUENCE [LARGE SCALE GENOMIC DNA]</scope>
    <source>
        <strain>AU 1054</strain>
    </source>
</reference>